<comment type="function">
    <text evidence="1">Catalyzes the reversible reaction in which hydroxymethyl group from 5,10-methylenetetrahydrofolate is transferred onto alpha-ketoisovalerate to form ketopantoate.</text>
</comment>
<comment type="catalytic activity">
    <reaction evidence="1">
        <text>3-methyl-2-oxobutanoate + (6R)-5,10-methylene-5,6,7,8-tetrahydrofolate + H2O = 2-dehydropantoate + (6S)-5,6,7,8-tetrahydrofolate</text>
        <dbReference type="Rhea" id="RHEA:11824"/>
        <dbReference type="ChEBI" id="CHEBI:11561"/>
        <dbReference type="ChEBI" id="CHEBI:11851"/>
        <dbReference type="ChEBI" id="CHEBI:15377"/>
        <dbReference type="ChEBI" id="CHEBI:15636"/>
        <dbReference type="ChEBI" id="CHEBI:57453"/>
        <dbReference type="EC" id="2.1.2.11"/>
    </reaction>
</comment>
<comment type="cofactor">
    <cofactor evidence="1">
        <name>Mg(2+)</name>
        <dbReference type="ChEBI" id="CHEBI:18420"/>
    </cofactor>
    <text evidence="1">Binds 1 Mg(2+) ion per subunit.</text>
</comment>
<comment type="pathway">
    <text evidence="1">Cofactor biosynthesis; (R)-pantothenate biosynthesis; (R)-pantoate from 3-methyl-2-oxobutanoate: step 1/2.</text>
</comment>
<comment type="subunit">
    <text evidence="1">Homodecamer; pentamer of dimers.</text>
</comment>
<comment type="subcellular location">
    <subcellularLocation>
        <location evidence="1">Cytoplasm</location>
    </subcellularLocation>
</comment>
<comment type="similarity">
    <text evidence="1">Belongs to the PanB family.</text>
</comment>
<protein>
    <recommendedName>
        <fullName evidence="1">3-methyl-2-oxobutanoate hydroxymethyltransferase</fullName>
        <ecNumber evidence="1">2.1.2.11</ecNumber>
    </recommendedName>
    <alternativeName>
        <fullName evidence="1">Ketopantoate hydroxymethyltransferase</fullName>
        <shortName evidence="1">KPHMT</shortName>
    </alternativeName>
</protein>
<sequence>MKSVLGFKKAKANREKISMVTCYDYTLAKIINSTDIDCILVGDSGGMVLLGKKNTTYTTLDDMQFMTQAVANGATDKFIVADLPFMSYRQSLEITMQAVTTLIQSGAHAIKLEGSSGNLDIIKHIVNSGVPVMGHIGMTPQFINSFGGFKVQGRTEEAAKHLLEEAKLLEQAGCFGIVLECIPANIAKDITQNLDIPTIGIGAGSNTDGQILVLQDMLGMNTDFQPKFVKKYIDGSKLFSDAINTYVKETKANTFPTKEHCYDYC</sequence>
<evidence type="ECO:0000255" key="1">
    <source>
        <dbReference type="HAMAP-Rule" id="MF_00156"/>
    </source>
</evidence>
<gene>
    <name evidence="1" type="primary">panB</name>
    <name type="ordered locus">FTN_1352</name>
</gene>
<organism>
    <name type="scientific">Francisella tularensis subsp. novicida (strain U112)</name>
    <dbReference type="NCBI Taxonomy" id="401614"/>
    <lineage>
        <taxon>Bacteria</taxon>
        <taxon>Pseudomonadati</taxon>
        <taxon>Pseudomonadota</taxon>
        <taxon>Gammaproteobacteria</taxon>
        <taxon>Thiotrichales</taxon>
        <taxon>Francisellaceae</taxon>
        <taxon>Francisella</taxon>
    </lineage>
</organism>
<accession>A0Q7L2</accession>
<feature type="chain" id="PRO_0000297269" description="3-methyl-2-oxobutanoate hydroxymethyltransferase">
    <location>
        <begin position="1"/>
        <end position="265"/>
    </location>
</feature>
<feature type="active site" description="Proton acceptor" evidence="1">
    <location>
        <position position="180"/>
    </location>
</feature>
<feature type="binding site" evidence="1">
    <location>
        <begin position="43"/>
        <end position="44"/>
    </location>
    <ligand>
        <name>3-methyl-2-oxobutanoate</name>
        <dbReference type="ChEBI" id="CHEBI:11851"/>
    </ligand>
</feature>
<feature type="binding site" evidence="1">
    <location>
        <position position="43"/>
    </location>
    <ligand>
        <name>Mg(2+)</name>
        <dbReference type="ChEBI" id="CHEBI:18420"/>
    </ligand>
</feature>
<feature type="binding site" evidence="1">
    <location>
        <position position="82"/>
    </location>
    <ligand>
        <name>3-methyl-2-oxobutanoate</name>
        <dbReference type="ChEBI" id="CHEBI:11851"/>
    </ligand>
</feature>
<feature type="binding site" evidence="1">
    <location>
        <position position="82"/>
    </location>
    <ligand>
        <name>Mg(2+)</name>
        <dbReference type="ChEBI" id="CHEBI:18420"/>
    </ligand>
</feature>
<feature type="binding site" evidence="1">
    <location>
        <position position="111"/>
    </location>
    <ligand>
        <name>3-methyl-2-oxobutanoate</name>
        <dbReference type="ChEBI" id="CHEBI:11851"/>
    </ligand>
</feature>
<feature type="binding site" evidence="1">
    <location>
        <position position="113"/>
    </location>
    <ligand>
        <name>Mg(2+)</name>
        <dbReference type="ChEBI" id="CHEBI:18420"/>
    </ligand>
</feature>
<dbReference type="EC" id="2.1.2.11" evidence="1"/>
<dbReference type="EMBL" id="CP000439">
    <property type="protein sequence ID" value="ABK90227.1"/>
    <property type="molecule type" value="Genomic_DNA"/>
</dbReference>
<dbReference type="RefSeq" id="WP_003040200.1">
    <property type="nucleotide sequence ID" value="NZ_CP009633.1"/>
</dbReference>
<dbReference type="SMR" id="A0Q7L2"/>
<dbReference type="KEGG" id="ftn:FTN_1352"/>
<dbReference type="KEGG" id="ftx:AW25_651"/>
<dbReference type="BioCyc" id="FTUL401614:G1G75-1397-MONOMER"/>
<dbReference type="UniPathway" id="UPA00028">
    <property type="reaction ID" value="UER00003"/>
</dbReference>
<dbReference type="Proteomes" id="UP000000762">
    <property type="component" value="Chromosome"/>
</dbReference>
<dbReference type="GO" id="GO:0005737">
    <property type="term" value="C:cytoplasm"/>
    <property type="evidence" value="ECO:0007669"/>
    <property type="project" value="UniProtKB-SubCell"/>
</dbReference>
<dbReference type="GO" id="GO:0003864">
    <property type="term" value="F:3-methyl-2-oxobutanoate hydroxymethyltransferase activity"/>
    <property type="evidence" value="ECO:0007669"/>
    <property type="project" value="UniProtKB-UniRule"/>
</dbReference>
<dbReference type="GO" id="GO:0000287">
    <property type="term" value="F:magnesium ion binding"/>
    <property type="evidence" value="ECO:0007669"/>
    <property type="project" value="TreeGrafter"/>
</dbReference>
<dbReference type="GO" id="GO:0015940">
    <property type="term" value="P:pantothenate biosynthetic process"/>
    <property type="evidence" value="ECO:0007669"/>
    <property type="project" value="UniProtKB-UniRule"/>
</dbReference>
<dbReference type="CDD" id="cd06557">
    <property type="entry name" value="KPHMT-like"/>
    <property type="match status" value="1"/>
</dbReference>
<dbReference type="FunFam" id="3.20.20.60:FF:000003">
    <property type="entry name" value="3-methyl-2-oxobutanoate hydroxymethyltransferase"/>
    <property type="match status" value="1"/>
</dbReference>
<dbReference type="Gene3D" id="3.20.20.60">
    <property type="entry name" value="Phosphoenolpyruvate-binding domains"/>
    <property type="match status" value="1"/>
</dbReference>
<dbReference type="HAMAP" id="MF_00156">
    <property type="entry name" value="PanB"/>
    <property type="match status" value="1"/>
</dbReference>
<dbReference type="InterPro" id="IPR003700">
    <property type="entry name" value="Pantoate_hydroxy_MeTrfase"/>
</dbReference>
<dbReference type="InterPro" id="IPR015813">
    <property type="entry name" value="Pyrv/PenolPyrv_kinase-like_dom"/>
</dbReference>
<dbReference type="InterPro" id="IPR040442">
    <property type="entry name" value="Pyrv_kinase-like_dom_sf"/>
</dbReference>
<dbReference type="NCBIfam" id="TIGR00222">
    <property type="entry name" value="panB"/>
    <property type="match status" value="1"/>
</dbReference>
<dbReference type="NCBIfam" id="NF001452">
    <property type="entry name" value="PRK00311.1"/>
    <property type="match status" value="1"/>
</dbReference>
<dbReference type="PANTHER" id="PTHR20881">
    <property type="entry name" value="3-METHYL-2-OXOBUTANOATE HYDROXYMETHYLTRANSFERASE"/>
    <property type="match status" value="1"/>
</dbReference>
<dbReference type="PANTHER" id="PTHR20881:SF0">
    <property type="entry name" value="3-METHYL-2-OXOBUTANOATE HYDROXYMETHYLTRANSFERASE"/>
    <property type="match status" value="1"/>
</dbReference>
<dbReference type="Pfam" id="PF02548">
    <property type="entry name" value="Pantoate_transf"/>
    <property type="match status" value="1"/>
</dbReference>
<dbReference type="PIRSF" id="PIRSF000388">
    <property type="entry name" value="Pantoate_hydroxy_MeTrfase"/>
    <property type="match status" value="1"/>
</dbReference>
<dbReference type="SUPFAM" id="SSF51621">
    <property type="entry name" value="Phosphoenolpyruvate/pyruvate domain"/>
    <property type="match status" value="1"/>
</dbReference>
<name>PANB_FRATN</name>
<keyword id="KW-0963">Cytoplasm</keyword>
<keyword id="KW-0460">Magnesium</keyword>
<keyword id="KW-0479">Metal-binding</keyword>
<keyword id="KW-0566">Pantothenate biosynthesis</keyword>
<keyword id="KW-0808">Transferase</keyword>
<reference key="1">
    <citation type="journal article" date="2007" name="Genome Biol.">
        <title>Comparison of Francisella tularensis genomes reveals evolutionary events associated with the emergence of human pathogenic strains.</title>
        <authorList>
            <person name="Rohmer L."/>
            <person name="Fong C."/>
            <person name="Abmayr S."/>
            <person name="Wasnick M."/>
            <person name="Larson Freeman T.J."/>
            <person name="Radey M."/>
            <person name="Guina T."/>
            <person name="Svensson K."/>
            <person name="Hayden H.S."/>
            <person name="Jacobs M."/>
            <person name="Gallagher L.A."/>
            <person name="Manoil C."/>
            <person name="Ernst R.K."/>
            <person name="Drees B."/>
            <person name="Buckley D."/>
            <person name="Haugen E."/>
            <person name="Bovee D."/>
            <person name="Zhou Y."/>
            <person name="Chang J."/>
            <person name="Levy R."/>
            <person name="Lim R."/>
            <person name="Gillett W."/>
            <person name="Guenthener D."/>
            <person name="Kang A."/>
            <person name="Shaffer S.A."/>
            <person name="Taylor G."/>
            <person name="Chen J."/>
            <person name="Gallis B."/>
            <person name="D'Argenio D.A."/>
            <person name="Forsman M."/>
            <person name="Olson M.V."/>
            <person name="Goodlett D.R."/>
            <person name="Kaul R."/>
            <person name="Miller S.I."/>
            <person name="Brittnacher M.J."/>
        </authorList>
    </citation>
    <scope>NUCLEOTIDE SEQUENCE [LARGE SCALE GENOMIC DNA]</scope>
    <source>
        <strain>U112</strain>
    </source>
</reference>
<proteinExistence type="inferred from homology"/>